<reference key="1">
    <citation type="submission" date="2007-04" db="EMBL/GenBank/DDBJ databases">
        <title>Complete sequence of Pyrobaculum arsenaticum DSM 13514.</title>
        <authorList>
            <consortium name="US DOE Joint Genome Institute"/>
            <person name="Copeland A."/>
            <person name="Lucas S."/>
            <person name="Lapidus A."/>
            <person name="Barry K."/>
            <person name="Glavina del Rio T."/>
            <person name="Dalin E."/>
            <person name="Tice H."/>
            <person name="Pitluck S."/>
            <person name="Chain P."/>
            <person name="Malfatti S."/>
            <person name="Shin M."/>
            <person name="Vergez L."/>
            <person name="Schmutz J."/>
            <person name="Larimer F."/>
            <person name="Land M."/>
            <person name="Hauser L."/>
            <person name="Kyrpides N."/>
            <person name="Mikhailova N."/>
            <person name="Cozen A.E."/>
            <person name="Fitz-Gibbon S.T."/>
            <person name="House C.H."/>
            <person name="Saltikov C."/>
            <person name="Lowe T.M."/>
            <person name="Richardson P."/>
        </authorList>
    </citation>
    <scope>NUCLEOTIDE SEQUENCE [LARGE SCALE GENOMIC DNA]</scope>
    <source>
        <strain>ATCC 700994 / DSM 13514 / JCM 11321 / PZ6</strain>
    </source>
</reference>
<sequence length="213" mass="24597">MFQPYTLEEGRYLVKLARSVVEAYLTHGKIVIPENPPPRLINDNYGVFTTIETVQGEKFELRGCIGYPEGYKNTLYATIYSAIGACCQDPRFPAMRREELNSVVFEVSILSPLTLLDDDPRKYLELVQVGRHGLVVKRGPYSGLLLPQVAVEECWSTEEFLIHTCVKAWLPGDCWLDRRTKLYIYEAQIFREREPNEEVYQRDLLGELAKCRK</sequence>
<organism>
    <name type="scientific">Pyrobaculum arsenaticum (strain DSM 13514 / JCM 11321 / PZ6)</name>
    <dbReference type="NCBI Taxonomy" id="340102"/>
    <lineage>
        <taxon>Archaea</taxon>
        <taxon>Thermoproteota</taxon>
        <taxon>Thermoprotei</taxon>
        <taxon>Thermoproteales</taxon>
        <taxon>Thermoproteaceae</taxon>
        <taxon>Pyrobaculum</taxon>
    </lineage>
</organism>
<accession>A4WGW1</accession>
<feature type="chain" id="PRO_1000082708" description="Protein Pars_0011">
    <location>
        <begin position="1"/>
        <end position="213"/>
    </location>
</feature>
<feature type="domain" description="AMMECR1" evidence="1">
    <location>
        <begin position="8"/>
        <end position="201"/>
    </location>
</feature>
<name>Y011_PYRAR</name>
<dbReference type="EMBL" id="CP000660">
    <property type="protein sequence ID" value="ABP49628.1"/>
    <property type="molecule type" value="Genomic_DNA"/>
</dbReference>
<dbReference type="SMR" id="A4WGW1"/>
<dbReference type="STRING" id="340102.Pars_0011"/>
<dbReference type="KEGG" id="pas:Pars_0011"/>
<dbReference type="HOGENOM" id="CLU_095686_1_1_2"/>
<dbReference type="OrthoDB" id="25187at2157"/>
<dbReference type="PhylomeDB" id="A4WGW1"/>
<dbReference type="Proteomes" id="UP000001567">
    <property type="component" value="Chromosome"/>
</dbReference>
<dbReference type="Gene3D" id="3.30.700.20">
    <property type="entry name" value="Hypothetical protein ph0010, domain 1"/>
    <property type="match status" value="1"/>
</dbReference>
<dbReference type="Gene3D" id="3.30.1490.150">
    <property type="entry name" value="Hypothetical protein ph0010, domain 2"/>
    <property type="match status" value="1"/>
</dbReference>
<dbReference type="HAMAP" id="MF_00645">
    <property type="entry name" value="AMMECR1"/>
    <property type="match status" value="1"/>
</dbReference>
<dbReference type="InterPro" id="IPR023473">
    <property type="entry name" value="AMMECR1"/>
</dbReference>
<dbReference type="InterPro" id="IPR036071">
    <property type="entry name" value="AMMECR1_dom_sf"/>
</dbReference>
<dbReference type="InterPro" id="IPR002733">
    <property type="entry name" value="AMMECR1_domain"/>
</dbReference>
<dbReference type="InterPro" id="IPR027485">
    <property type="entry name" value="AMMECR1_N"/>
</dbReference>
<dbReference type="InterPro" id="IPR027623">
    <property type="entry name" value="AmmeMemoSam_A"/>
</dbReference>
<dbReference type="InterPro" id="IPR023472">
    <property type="entry name" value="Uncharacterised_MJ0810"/>
</dbReference>
<dbReference type="NCBIfam" id="TIGR04335">
    <property type="entry name" value="AmmeMemoSam_A"/>
    <property type="match status" value="1"/>
</dbReference>
<dbReference type="NCBIfam" id="TIGR00296">
    <property type="entry name" value="TIGR00296 family protein"/>
    <property type="match status" value="1"/>
</dbReference>
<dbReference type="PANTHER" id="PTHR13016:SF0">
    <property type="entry name" value="AMME SYNDROME CANDIDATE GENE 1 PROTEIN"/>
    <property type="match status" value="1"/>
</dbReference>
<dbReference type="PANTHER" id="PTHR13016">
    <property type="entry name" value="AMMECR1 HOMOLOG"/>
    <property type="match status" value="1"/>
</dbReference>
<dbReference type="Pfam" id="PF01871">
    <property type="entry name" value="AMMECR1"/>
    <property type="match status" value="1"/>
</dbReference>
<dbReference type="SUPFAM" id="SSF143447">
    <property type="entry name" value="AMMECR1-like"/>
    <property type="match status" value="1"/>
</dbReference>
<dbReference type="PROSITE" id="PS51112">
    <property type="entry name" value="AMMECR1"/>
    <property type="match status" value="1"/>
</dbReference>
<evidence type="ECO:0000255" key="1">
    <source>
        <dbReference type="HAMAP-Rule" id="MF_00645"/>
    </source>
</evidence>
<proteinExistence type="inferred from homology"/>
<gene>
    <name type="ordered locus">Pars_0011</name>
</gene>
<protein>
    <recommendedName>
        <fullName evidence="1">Protein Pars_0011</fullName>
    </recommendedName>
</protein>